<gene>
    <name evidence="1" type="primary">mtlD</name>
    <name type="ordered locus">BBR47_56360</name>
</gene>
<dbReference type="EC" id="1.1.1.17" evidence="1"/>
<dbReference type="EMBL" id="AP008955">
    <property type="protein sequence ID" value="BAH46613.1"/>
    <property type="molecule type" value="Genomic_DNA"/>
</dbReference>
<dbReference type="RefSeq" id="WP_015893799.1">
    <property type="nucleotide sequence ID" value="NC_012491.1"/>
</dbReference>
<dbReference type="SMR" id="C0Z8I6"/>
<dbReference type="STRING" id="358681.BBR47_56360"/>
<dbReference type="KEGG" id="bbe:BBR47_56360"/>
<dbReference type="eggNOG" id="COG0246">
    <property type="taxonomic scope" value="Bacteria"/>
</dbReference>
<dbReference type="HOGENOM" id="CLU_036089_2_0_9"/>
<dbReference type="Proteomes" id="UP000001877">
    <property type="component" value="Chromosome"/>
</dbReference>
<dbReference type="GO" id="GO:0005829">
    <property type="term" value="C:cytosol"/>
    <property type="evidence" value="ECO:0007669"/>
    <property type="project" value="TreeGrafter"/>
</dbReference>
<dbReference type="GO" id="GO:0008926">
    <property type="term" value="F:mannitol-1-phosphate 5-dehydrogenase activity"/>
    <property type="evidence" value="ECO:0007669"/>
    <property type="project" value="UniProtKB-UniRule"/>
</dbReference>
<dbReference type="GO" id="GO:0019592">
    <property type="term" value="P:mannitol catabolic process"/>
    <property type="evidence" value="ECO:0007669"/>
    <property type="project" value="TreeGrafter"/>
</dbReference>
<dbReference type="Gene3D" id="1.10.1040.10">
    <property type="entry name" value="N-(1-d-carboxylethyl)-l-norvaline Dehydrogenase, domain 2"/>
    <property type="match status" value="1"/>
</dbReference>
<dbReference type="Gene3D" id="3.40.50.720">
    <property type="entry name" value="NAD(P)-binding Rossmann-like Domain"/>
    <property type="match status" value="1"/>
</dbReference>
<dbReference type="HAMAP" id="MF_00196">
    <property type="entry name" value="Mannitol_dehydrog"/>
    <property type="match status" value="1"/>
</dbReference>
<dbReference type="InterPro" id="IPR008927">
    <property type="entry name" value="6-PGluconate_DH-like_C_sf"/>
</dbReference>
<dbReference type="InterPro" id="IPR013328">
    <property type="entry name" value="6PGD_dom2"/>
</dbReference>
<dbReference type="InterPro" id="IPR023028">
    <property type="entry name" value="Mannitol_1_phos_5_DH"/>
</dbReference>
<dbReference type="InterPro" id="IPR000669">
    <property type="entry name" value="Mannitol_DH"/>
</dbReference>
<dbReference type="InterPro" id="IPR013118">
    <property type="entry name" value="Mannitol_DH_C"/>
</dbReference>
<dbReference type="InterPro" id="IPR023027">
    <property type="entry name" value="Mannitol_DH_CS"/>
</dbReference>
<dbReference type="InterPro" id="IPR013131">
    <property type="entry name" value="Mannitol_DH_N"/>
</dbReference>
<dbReference type="InterPro" id="IPR036291">
    <property type="entry name" value="NAD(P)-bd_dom_sf"/>
</dbReference>
<dbReference type="NCBIfam" id="NF002646">
    <property type="entry name" value="PRK02318.1-2"/>
    <property type="match status" value="1"/>
</dbReference>
<dbReference type="NCBIfam" id="NF002647">
    <property type="entry name" value="PRK02318.1-3"/>
    <property type="match status" value="1"/>
</dbReference>
<dbReference type="NCBIfam" id="NF002649">
    <property type="entry name" value="PRK02318.2-1"/>
    <property type="match status" value="1"/>
</dbReference>
<dbReference type="NCBIfam" id="NF002652">
    <property type="entry name" value="PRK02318.2-5"/>
    <property type="match status" value="1"/>
</dbReference>
<dbReference type="PANTHER" id="PTHR30524:SF0">
    <property type="entry name" value="ALTRONATE OXIDOREDUCTASE-RELATED"/>
    <property type="match status" value="1"/>
</dbReference>
<dbReference type="PANTHER" id="PTHR30524">
    <property type="entry name" value="MANNITOL-1-PHOSPHATE 5-DEHYDROGENASE"/>
    <property type="match status" value="1"/>
</dbReference>
<dbReference type="Pfam" id="PF01232">
    <property type="entry name" value="Mannitol_dh"/>
    <property type="match status" value="1"/>
</dbReference>
<dbReference type="Pfam" id="PF08125">
    <property type="entry name" value="Mannitol_dh_C"/>
    <property type="match status" value="1"/>
</dbReference>
<dbReference type="PRINTS" id="PR00084">
    <property type="entry name" value="MTLDHDRGNASE"/>
</dbReference>
<dbReference type="SUPFAM" id="SSF48179">
    <property type="entry name" value="6-phosphogluconate dehydrogenase C-terminal domain-like"/>
    <property type="match status" value="1"/>
</dbReference>
<dbReference type="SUPFAM" id="SSF51735">
    <property type="entry name" value="NAD(P)-binding Rossmann-fold domains"/>
    <property type="match status" value="1"/>
</dbReference>
<dbReference type="PROSITE" id="PS00974">
    <property type="entry name" value="MANNITOL_DHGENASE"/>
    <property type="match status" value="1"/>
</dbReference>
<accession>C0Z8I6</accession>
<protein>
    <recommendedName>
        <fullName evidence="1">Mannitol-1-phosphate 5-dehydrogenase</fullName>
        <ecNumber evidence="1">1.1.1.17</ecNumber>
    </recommendedName>
</protein>
<evidence type="ECO:0000255" key="1">
    <source>
        <dbReference type="HAMAP-Rule" id="MF_00196"/>
    </source>
</evidence>
<comment type="catalytic activity">
    <reaction evidence="1">
        <text>D-mannitol 1-phosphate + NAD(+) = beta-D-fructose 6-phosphate + NADH + H(+)</text>
        <dbReference type="Rhea" id="RHEA:19661"/>
        <dbReference type="ChEBI" id="CHEBI:15378"/>
        <dbReference type="ChEBI" id="CHEBI:57540"/>
        <dbReference type="ChEBI" id="CHEBI:57634"/>
        <dbReference type="ChEBI" id="CHEBI:57945"/>
        <dbReference type="ChEBI" id="CHEBI:61381"/>
        <dbReference type="EC" id="1.1.1.17"/>
    </reaction>
</comment>
<comment type="similarity">
    <text evidence="1">Belongs to the mannitol dehydrogenase family.</text>
</comment>
<keyword id="KW-0520">NAD</keyword>
<keyword id="KW-0560">Oxidoreductase</keyword>
<keyword id="KW-1185">Reference proteome</keyword>
<proteinExistence type="inferred from homology"/>
<sequence length="386" mass="42019">MLAVHFGAGNIGRGFIGQLLQKAGYEIAFVDVNAALVDELNERKMYRVQLATTGKPESVVEGVRAINGQDVAAVAEAIATADLVTTAVGPNILPHIAGAIAAGITQRLTVHARPLNVIACENMIGGSEKLKEHVYEHLTESVQAQAAQWIGFPNAAVDRIVPLQQHADKLLVMVEPFFEWVVDSSQIVGEVPAIEGVTYVEDLAPYIERKLFTVNTGHAVIAYLGYQLGMKTIDEAMRDDRIVQATRGALQETGALLAAKYGFDPQVHGQYVEKILGRYTNPLLSDDIVRVARSPIRKLSQHDRLVGPALQCMEKGMNASYLGLAIAAALAFDYPEDAESARIQASLKEFGWENTLHNCTGIPAGHPLEEIVREQARRLKEWSGSH</sequence>
<reference key="1">
    <citation type="submission" date="2005-03" db="EMBL/GenBank/DDBJ databases">
        <title>Brevibacillus brevis strain 47, complete genome.</title>
        <authorList>
            <person name="Hosoyama A."/>
            <person name="Yamada R."/>
            <person name="Hongo Y."/>
            <person name="Terui Y."/>
            <person name="Ankai A."/>
            <person name="Masuyama W."/>
            <person name="Sekiguchi M."/>
            <person name="Takeda T."/>
            <person name="Asano K."/>
            <person name="Ohji S."/>
            <person name="Ichikawa N."/>
            <person name="Narita S."/>
            <person name="Aoki N."/>
            <person name="Miura H."/>
            <person name="Matsushita S."/>
            <person name="Sekigawa T."/>
            <person name="Yamagata H."/>
            <person name="Yoshikawa H."/>
            <person name="Udaka S."/>
            <person name="Tanikawa S."/>
            <person name="Fujita N."/>
        </authorList>
    </citation>
    <scope>NUCLEOTIDE SEQUENCE [LARGE SCALE GENOMIC DNA]</scope>
    <source>
        <strain>47 / JCM 6285 / NBRC 100599</strain>
    </source>
</reference>
<organism>
    <name type="scientific">Brevibacillus brevis (strain 47 / JCM 6285 / NBRC 100599)</name>
    <dbReference type="NCBI Taxonomy" id="358681"/>
    <lineage>
        <taxon>Bacteria</taxon>
        <taxon>Bacillati</taxon>
        <taxon>Bacillota</taxon>
        <taxon>Bacilli</taxon>
        <taxon>Bacillales</taxon>
        <taxon>Paenibacillaceae</taxon>
        <taxon>Brevibacillus</taxon>
    </lineage>
</organism>
<feature type="chain" id="PRO_1000124384" description="Mannitol-1-phosphate 5-dehydrogenase">
    <location>
        <begin position="1"/>
        <end position="386"/>
    </location>
</feature>
<feature type="binding site" evidence="1">
    <location>
        <begin position="3"/>
        <end position="14"/>
    </location>
    <ligand>
        <name>NAD(+)</name>
        <dbReference type="ChEBI" id="CHEBI:57540"/>
    </ligand>
</feature>
<name>MTLD_BREBN</name>